<dbReference type="EC" id="2.3.1.-" evidence="6"/>
<dbReference type="EC" id="6.3.2.-" evidence="6"/>
<dbReference type="EMBL" id="KB644411">
    <property type="protein sequence ID" value="EPS29069.1"/>
    <property type="molecule type" value="Genomic_DNA"/>
</dbReference>
<dbReference type="SMR" id="S7ZFK6"/>
<dbReference type="STRING" id="933388.S7ZFK6"/>
<dbReference type="eggNOG" id="KOG1178">
    <property type="taxonomic scope" value="Eukaryota"/>
</dbReference>
<dbReference type="eggNOG" id="KOG1202">
    <property type="taxonomic scope" value="Eukaryota"/>
</dbReference>
<dbReference type="HOGENOM" id="CLU_000022_37_5_1"/>
<dbReference type="OrthoDB" id="329835at2759"/>
<dbReference type="PhylomeDB" id="S7ZFK6"/>
<dbReference type="Proteomes" id="UP000019376">
    <property type="component" value="Unassembled WGS sequence"/>
</dbReference>
<dbReference type="GO" id="GO:0004315">
    <property type="term" value="F:3-oxoacyl-[acyl-carrier-protein] synthase activity"/>
    <property type="evidence" value="ECO:0007669"/>
    <property type="project" value="InterPro"/>
</dbReference>
<dbReference type="GO" id="GO:0004312">
    <property type="term" value="F:fatty acid synthase activity"/>
    <property type="evidence" value="ECO:0007669"/>
    <property type="project" value="TreeGrafter"/>
</dbReference>
<dbReference type="GO" id="GO:0016874">
    <property type="term" value="F:ligase activity"/>
    <property type="evidence" value="ECO:0007669"/>
    <property type="project" value="UniProtKB-KW"/>
</dbReference>
<dbReference type="GO" id="GO:0008168">
    <property type="term" value="F:methyltransferase activity"/>
    <property type="evidence" value="ECO:0007669"/>
    <property type="project" value="UniProtKB-KW"/>
</dbReference>
<dbReference type="GO" id="GO:0016491">
    <property type="term" value="F:oxidoreductase activity"/>
    <property type="evidence" value="ECO:0007669"/>
    <property type="project" value="UniProtKB-KW"/>
</dbReference>
<dbReference type="GO" id="GO:0031177">
    <property type="term" value="F:phosphopantetheine binding"/>
    <property type="evidence" value="ECO:0007669"/>
    <property type="project" value="InterPro"/>
</dbReference>
<dbReference type="GO" id="GO:0006633">
    <property type="term" value="P:fatty acid biosynthetic process"/>
    <property type="evidence" value="ECO:0007669"/>
    <property type="project" value="InterPro"/>
</dbReference>
<dbReference type="GO" id="GO:1901336">
    <property type="term" value="P:lactone biosynthetic process"/>
    <property type="evidence" value="ECO:0007669"/>
    <property type="project" value="UniProtKB-ARBA"/>
</dbReference>
<dbReference type="GO" id="GO:0032259">
    <property type="term" value="P:methylation"/>
    <property type="evidence" value="ECO:0007669"/>
    <property type="project" value="UniProtKB-KW"/>
</dbReference>
<dbReference type="GO" id="GO:0030639">
    <property type="term" value="P:polyketide biosynthetic process"/>
    <property type="evidence" value="ECO:0007669"/>
    <property type="project" value="UniProtKB-ARBA"/>
</dbReference>
<dbReference type="GO" id="GO:0009403">
    <property type="term" value="P:toxin biosynthetic process"/>
    <property type="evidence" value="ECO:0007669"/>
    <property type="project" value="UniProtKB-ARBA"/>
</dbReference>
<dbReference type="CDD" id="cd05930">
    <property type="entry name" value="A_NRPS"/>
    <property type="match status" value="1"/>
</dbReference>
<dbReference type="CDD" id="cd02440">
    <property type="entry name" value="AdoMet_MTases"/>
    <property type="match status" value="1"/>
</dbReference>
<dbReference type="CDD" id="cd19532">
    <property type="entry name" value="C_PKS-NRPS"/>
    <property type="match status" value="1"/>
</dbReference>
<dbReference type="CDD" id="cd00833">
    <property type="entry name" value="PKS"/>
    <property type="match status" value="1"/>
</dbReference>
<dbReference type="FunFam" id="3.40.47.10:FF:000019">
    <property type="entry name" value="Polyketide synthase type I"/>
    <property type="match status" value="1"/>
</dbReference>
<dbReference type="Gene3D" id="3.30.300.30">
    <property type="match status" value="1"/>
</dbReference>
<dbReference type="Gene3D" id="3.40.47.10">
    <property type="match status" value="1"/>
</dbReference>
<dbReference type="Gene3D" id="1.10.1200.10">
    <property type="entry name" value="ACP-like"/>
    <property type="match status" value="2"/>
</dbReference>
<dbReference type="Gene3D" id="3.30.559.10">
    <property type="entry name" value="Chloramphenicol acetyltransferase-like domain"/>
    <property type="match status" value="1"/>
</dbReference>
<dbReference type="Gene3D" id="3.40.366.10">
    <property type="entry name" value="Malonyl-Coenzyme A Acyl Carrier Protein, domain 2"/>
    <property type="match status" value="1"/>
</dbReference>
<dbReference type="Gene3D" id="3.40.50.12780">
    <property type="entry name" value="N-terminal domain of ligase-like"/>
    <property type="match status" value="1"/>
</dbReference>
<dbReference type="Gene3D" id="3.40.50.720">
    <property type="entry name" value="NAD(P)-binding Rossmann-like Domain"/>
    <property type="match status" value="2"/>
</dbReference>
<dbReference type="Gene3D" id="3.30.559.30">
    <property type="entry name" value="Nonribosomal peptide synthetase, condensation domain"/>
    <property type="match status" value="1"/>
</dbReference>
<dbReference type="Gene3D" id="3.10.129.110">
    <property type="entry name" value="Polyketide synthase dehydratase"/>
    <property type="match status" value="1"/>
</dbReference>
<dbReference type="Gene3D" id="3.40.50.150">
    <property type="entry name" value="Vaccinia Virus protein VP39"/>
    <property type="match status" value="1"/>
</dbReference>
<dbReference type="InterPro" id="IPR001227">
    <property type="entry name" value="Ac_transferase_dom_sf"/>
</dbReference>
<dbReference type="InterPro" id="IPR036736">
    <property type="entry name" value="ACP-like_sf"/>
</dbReference>
<dbReference type="InterPro" id="IPR014043">
    <property type="entry name" value="Acyl_transferase_dom"/>
</dbReference>
<dbReference type="InterPro" id="IPR016035">
    <property type="entry name" value="Acyl_Trfase/lysoPLipase"/>
</dbReference>
<dbReference type="InterPro" id="IPR045851">
    <property type="entry name" value="AMP-bd_C_sf"/>
</dbReference>
<dbReference type="InterPro" id="IPR020845">
    <property type="entry name" value="AMP-binding_CS"/>
</dbReference>
<dbReference type="InterPro" id="IPR000873">
    <property type="entry name" value="AMP-dep_synth/lig_dom"/>
</dbReference>
<dbReference type="InterPro" id="IPR042099">
    <property type="entry name" value="ANL_N_sf"/>
</dbReference>
<dbReference type="InterPro" id="IPR023213">
    <property type="entry name" value="CAT-like_dom_sf"/>
</dbReference>
<dbReference type="InterPro" id="IPR001242">
    <property type="entry name" value="Condensatn"/>
</dbReference>
<dbReference type="InterPro" id="IPR013120">
    <property type="entry name" value="Far_NAD-bd"/>
</dbReference>
<dbReference type="InterPro" id="IPR018201">
    <property type="entry name" value="Ketoacyl_synth_AS"/>
</dbReference>
<dbReference type="InterPro" id="IPR014031">
    <property type="entry name" value="Ketoacyl_synth_C"/>
</dbReference>
<dbReference type="InterPro" id="IPR014030">
    <property type="entry name" value="Ketoacyl_synth_N"/>
</dbReference>
<dbReference type="InterPro" id="IPR016036">
    <property type="entry name" value="Malonyl_transacylase_ACP-bd"/>
</dbReference>
<dbReference type="InterPro" id="IPR013217">
    <property type="entry name" value="Methyltransf_12"/>
</dbReference>
<dbReference type="InterPro" id="IPR036291">
    <property type="entry name" value="NAD(P)-bd_dom_sf"/>
</dbReference>
<dbReference type="InterPro" id="IPR032821">
    <property type="entry name" value="PKS_assoc"/>
</dbReference>
<dbReference type="InterPro" id="IPR020841">
    <property type="entry name" value="PKS_Beta-ketoAc_synthase_dom"/>
</dbReference>
<dbReference type="InterPro" id="IPR042104">
    <property type="entry name" value="PKS_dehydratase_sf"/>
</dbReference>
<dbReference type="InterPro" id="IPR020807">
    <property type="entry name" value="PKS_DH"/>
</dbReference>
<dbReference type="InterPro" id="IPR049551">
    <property type="entry name" value="PKS_DH_C"/>
</dbReference>
<dbReference type="InterPro" id="IPR049552">
    <property type="entry name" value="PKS_DH_N"/>
</dbReference>
<dbReference type="InterPro" id="IPR013968">
    <property type="entry name" value="PKS_KR"/>
</dbReference>
<dbReference type="InterPro" id="IPR049900">
    <property type="entry name" value="PKS_mFAS_DH"/>
</dbReference>
<dbReference type="InterPro" id="IPR050091">
    <property type="entry name" value="PKS_NRPS_Biosynth_Enz"/>
</dbReference>
<dbReference type="InterPro" id="IPR020806">
    <property type="entry name" value="PKS_PP-bd"/>
</dbReference>
<dbReference type="InterPro" id="IPR009081">
    <property type="entry name" value="PP-bd_ACP"/>
</dbReference>
<dbReference type="InterPro" id="IPR006162">
    <property type="entry name" value="Ppantetheine_attach_site"/>
</dbReference>
<dbReference type="InterPro" id="IPR029063">
    <property type="entry name" value="SAM-dependent_MTases_sf"/>
</dbReference>
<dbReference type="InterPro" id="IPR016039">
    <property type="entry name" value="Thiolase-like"/>
</dbReference>
<dbReference type="PANTHER" id="PTHR43775">
    <property type="entry name" value="FATTY ACID SYNTHASE"/>
    <property type="match status" value="1"/>
</dbReference>
<dbReference type="PANTHER" id="PTHR43775:SF20">
    <property type="entry name" value="HYBRID PKS-NRPS SYNTHETASE APDA"/>
    <property type="match status" value="1"/>
</dbReference>
<dbReference type="Pfam" id="PF00698">
    <property type="entry name" value="Acyl_transf_1"/>
    <property type="match status" value="1"/>
</dbReference>
<dbReference type="Pfam" id="PF00501">
    <property type="entry name" value="AMP-binding"/>
    <property type="match status" value="1"/>
</dbReference>
<dbReference type="Pfam" id="PF00668">
    <property type="entry name" value="Condensation"/>
    <property type="match status" value="1"/>
</dbReference>
<dbReference type="Pfam" id="PF16197">
    <property type="entry name" value="KAsynt_C_assoc"/>
    <property type="match status" value="1"/>
</dbReference>
<dbReference type="Pfam" id="PF00109">
    <property type="entry name" value="ketoacyl-synt"/>
    <property type="match status" value="1"/>
</dbReference>
<dbReference type="Pfam" id="PF02801">
    <property type="entry name" value="Ketoacyl-synt_C"/>
    <property type="match status" value="1"/>
</dbReference>
<dbReference type="Pfam" id="PF08659">
    <property type="entry name" value="KR"/>
    <property type="match status" value="1"/>
</dbReference>
<dbReference type="Pfam" id="PF08242">
    <property type="entry name" value="Methyltransf_12"/>
    <property type="match status" value="1"/>
</dbReference>
<dbReference type="Pfam" id="PF07993">
    <property type="entry name" value="NAD_binding_4"/>
    <property type="match status" value="1"/>
</dbReference>
<dbReference type="Pfam" id="PF21089">
    <property type="entry name" value="PKS_DH_N"/>
    <property type="match status" value="1"/>
</dbReference>
<dbReference type="Pfam" id="PF00550">
    <property type="entry name" value="PP-binding"/>
    <property type="match status" value="1"/>
</dbReference>
<dbReference type="Pfam" id="PF14765">
    <property type="entry name" value="PS-DH"/>
    <property type="match status" value="1"/>
</dbReference>
<dbReference type="SMART" id="SM00827">
    <property type="entry name" value="PKS_AT"/>
    <property type="match status" value="1"/>
</dbReference>
<dbReference type="SMART" id="SM00826">
    <property type="entry name" value="PKS_DH"/>
    <property type="match status" value="1"/>
</dbReference>
<dbReference type="SMART" id="SM00822">
    <property type="entry name" value="PKS_KR"/>
    <property type="match status" value="1"/>
</dbReference>
<dbReference type="SMART" id="SM00825">
    <property type="entry name" value="PKS_KS"/>
    <property type="match status" value="1"/>
</dbReference>
<dbReference type="SMART" id="SM00823">
    <property type="entry name" value="PKS_PP"/>
    <property type="match status" value="1"/>
</dbReference>
<dbReference type="SUPFAM" id="SSF56801">
    <property type="entry name" value="Acetyl-CoA synthetase-like"/>
    <property type="match status" value="1"/>
</dbReference>
<dbReference type="SUPFAM" id="SSF47336">
    <property type="entry name" value="ACP-like"/>
    <property type="match status" value="2"/>
</dbReference>
<dbReference type="SUPFAM" id="SSF52777">
    <property type="entry name" value="CoA-dependent acyltransferases"/>
    <property type="match status" value="2"/>
</dbReference>
<dbReference type="SUPFAM" id="SSF52151">
    <property type="entry name" value="FabD/lysophospholipase-like"/>
    <property type="match status" value="1"/>
</dbReference>
<dbReference type="SUPFAM" id="SSF51735">
    <property type="entry name" value="NAD(P)-binding Rossmann-fold domains"/>
    <property type="match status" value="2"/>
</dbReference>
<dbReference type="SUPFAM" id="SSF55048">
    <property type="entry name" value="Probable ACP-binding domain of malonyl-CoA ACP transacylase"/>
    <property type="match status" value="1"/>
</dbReference>
<dbReference type="SUPFAM" id="SSF53335">
    <property type="entry name" value="S-adenosyl-L-methionine-dependent methyltransferases"/>
    <property type="match status" value="1"/>
</dbReference>
<dbReference type="SUPFAM" id="SSF53901">
    <property type="entry name" value="Thiolase-like"/>
    <property type="match status" value="1"/>
</dbReference>
<dbReference type="PROSITE" id="PS00455">
    <property type="entry name" value="AMP_BINDING"/>
    <property type="match status" value="1"/>
</dbReference>
<dbReference type="PROSITE" id="PS50075">
    <property type="entry name" value="CARRIER"/>
    <property type="match status" value="2"/>
</dbReference>
<dbReference type="PROSITE" id="PS00606">
    <property type="entry name" value="KS3_1"/>
    <property type="match status" value="1"/>
</dbReference>
<dbReference type="PROSITE" id="PS52004">
    <property type="entry name" value="KS3_2"/>
    <property type="match status" value="1"/>
</dbReference>
<dbReference type="PROSITE" id="PS00012">
    <property type="entry name" value="PHOSPHOPANTETHEINE"/>
    <property type="match status" value="1"/>
</dbReference>
<dbReference type="PROSITE" id="PS52019">
    <property type="entry name" value="PKS_MFAS_DH"/>
    <property type="match status" value="1"/>
</dbReference>
<evidence type="ECO:0000255" key="1"/>
<evidence type="ECO:0000255" key="2">
    <source>
        <dbReference type="PROSITE-ProRule" id="PRU00258"/>
    </source>
</evidence>
<evidence type="ECO:0000255" key="3">
    <source>
        <dbReference type="PROSITE-ProRule" id="PRU01348"/>
    </source>
</evidence>
<evidence type="ECO:0000255" key="4">
    <source>
        <dbReference type="PROSITE-ProRule" id="PRU01363"/>
    </source>
</evidence>
<evidence type="ECO:0000256" key="5">
    <source>
        <dbReference type="SAM" id="MobiDB-lite"/>
    </source>
</evidence>
<evidence type="ECO:0000269" key="6">
    <source>
    </source>
</evidence>
<evidence type="ECO:0000303" key="7">
    <source>
    </source>
</evidence>
<evidence type="ECO:0000305" key="8"/>
<evidence type="ECO:0000305" key="9">
    <source>
    </source>
</evidence>
<evidence type="ECO:0000305" key="10">
    <source>
    </source>
</evidence>
<sequence>MAPSQAPREPIAIVGSGCRFPGESSSPSKLWELLQAPRDVQTEIPPTRFNPHGFYHPDNLHHGTSNVRHSYLLTEDHRHFDAQFFGIKPAEAHCIDPQQRLLMETVYESLESAGLRLEDLRGSETAVYVGLMCGDYADIVLRDPESFPMYLSTGTARSIMSNRISYFFDWHGPSMTIDTACSSSLVAVHEAVQTLRLGRSRVAVAAGSNLCLSPEPYIAESKLQMLSPTGRSRMWDIQADGYARGDGVAAVVLKTLSAALADGDHIECLIRETSVNQDGRTRGITMPSSEAQTRLIQDTYARAGLDPMKPQERCQYFEAHGTGTPTGDPLEAAAIRQAFFPGDNNQDRGCLFVGSIKTVVGHTEGTAGLAGVLKASLALRNGIIPPNLLFNQLNPKIKPFYTNLEIATAAKPWPVLPAGVPRRASVNSFGFGGTNAHAIIEAYEPALTAPSKSTEPDIAFIPFVFSAASESALRRMLELYAQHLSKNPTINARDLGWTLQARRSRFPFSIAVPGATTDQLRSNLETRLNSTDARQPLKIVKQESRPENPRILGVFTGQGAQWATMGRALYQSPKVRQIIQELDASLQALPIGERPSWTLASELTADASVSRIKAAEISQPMCTAVQVVLVQLLQSAGVVFDAVVGHSSGEIAAAYAAGFLSGTDAIRIAYYRGLCARLAQGAHGEKGAMMAVGTGVEDALELCAEPEFRGRMSVAAVNSSASVTLSGDADAITQAKEILDEEKKFARVLVVDKAYHSHHMQACSGRYLSCLAKARIAVSAPTDTKCVWYSTVRQGPVTEADLADLTGPYWNDNMVSPVLFAQAVETALAARGPFNMAVEVGPHPALRGPAQQTVQDVLETSLPYTPTLQRGMNDVEAMAECLGLLWQGLAPGFVDLSSYDAFLSQGAVSRVIKDLPRYSWDHDRVFWYESRVSRATRQRIAASHPILGTRCPDGVEQEFRWRNFLSLKELPWLTGHRIQGQIIFPGAGYISAAVDSARAMSSNESIQLVELQELLIRQAIVFEDENASVEILVSITDVTHHSKDMVRAQFSFYSAVGKESTQMTLNASGRLVITYGPVRKDALPVQRPSLVDMVDVPSERFYNALDPLGYSYTGRFRALKSMQRKLGIATGLVTRQEAADLSSVTLDPAMLDAAIQAVLLAKSFPGDGELWCSQVPKVIHRIAVNPTLCDPSGNGVESTFPLDAVLTMMKASDTQGDVDVYSADGQYTMIRMEGIHAVPLEATNADRDRPFFSGVVWGPAAPDSQTVNFDATATPEEYELAYVLERVATFYLRKIHLAFPMDHSARHEGPYVGLLNYATYVTQQVASGYHRYTQPHWARDTVAVIKSESQRFPNNIDLAVMHIIGEHMVDVISTRATILEHLTKDNLLSRYYEQAMGIGHFSDYLASVVEQIVHRYPQMKVLEIGAGTGMATKKVIQRVGHSFGSYTFTDISSGFFENAREIFASHQDQMVYKVLDAEKDPVAQGFGEQSYDLIVASFVLHATSHLETTLHNLRRLLKPGGYVVMLEVTNLEQSRLGYIFGSLPGWWLGANDGRILSPCVPTEEWDRLLKLTGFSGVDTFTSDADALPYPASAIVSQAVDETVDFLRNPLGTPSDFVNRATPVVLIGGASSSVRVIRDVVKRHLDTRFDQVQVVDRLSDFVAISPAVSNGLLTLNLSDLEEPVFQNMTADSLAALKLLYERSNYVLWVTEDARAGNPHQNQSLGFGRSMMVEMPHVQSQFLDLDRITETSSVASRIVDAALRFVGVNMPDRGGDVASAGLLWSTEPEIAVIGGRELLPRIKLNRSQNLRYNASRRAIAEDVDMDQKSVQLVRNGNAYVLEQGSTSGFGNQTPGYTRIRVDVSSLKSLHLGRGNALYLVAGTVLATGEKVIGFADKNSSIVDIPPSWMSHRPDISMAALILSIIARLFSRAILSSISPGGVLVVAEPDELLAPVLEWQASQQKIRVVFVTTQEDAPERPNWVVLHSQVHVRSLPKLAPTEPVTILDLSTGEEPSALALKLRNSLHPASAFERLTYWFSDHARRGEIHIPAEAMLTMYRPPMSPPASDSVIASHSFPVTDVSQIPAARCPLAVVDWQSTSHVPALIRPVDHYPMLKSNKTYWLVGLTGSLGLSLCAWMIHQGAQNVVLTSRNPKIDQIILQELRSLGARVEVYAGDVTNQESLRGVYDRICQTLPPVAGVGQGAMVLIDTMIKDMEIDAMQSVLQPKVKGSINLDELFSAERPLDFFIFFSSATCVTGNIGQSNYAAANMFMTGLAANRNRRGLAGSVMNIGAIMGVGYVTRETSEALQRNLLKSGHVWMSEQDFHTIFAEAILAGTPGSDANVEITCGLRITNASEEQRPLWSFNPRFQHLVVMEEQVEETYEQDKKGMSLKLQLREARTTDEIYEVIKECFIVKLQIMLGLDDAATNSITSKAADDLGIDSLNTVEIRSWFLKEMKVDIPVLRILGGATIGEIIKFVLEKLPSDMTPSLGLSPPTGAASKATSQPNPKPKVVVERRNVPRLEKKIVHSAGSRTSSSVTGTSKSVSPARSMDTASSQTSEAASPSIHTEEITKPLKPLAPLLKADVVSSNLGKVITPVEQTAALSVRKEPLSFGQSRFWFLKLYLEDQTTFNITCLLRMTGPLSVDSLSRAVTAVGQRHEALRTCFTVEDGQSPVQTILPESTLKLERQEYRTMADVNTATKKLTQHVYEMESGRLMRVILLSSAPNSSVHYVLVGYHHINMDGVSLEVFLHDLEKAYRGQPLSSDLLQYPDYAAKQRQERNQGAWQDDLTFWKNEMVGSNLEIPLLPLASVAIRKPLTQYRHHRVEQRLDARLGAQIRQLCQSIKATPSHFYLATFTTLLARLTRTREIWVGMADANRIQAETADSIGNYLNLLALRMQYDPDQPFVASVQAARKKSYGALAHSRIPFDVLLSELQVPRSSTHSPLFQVFMDYRHDVREKRMFGDCQLEGVEYEMGRTAYDIALDVVDTADDGPLIIMGLQESLYSPDTAQMLLNSFLEMVRAFAQDSKQPGGHVSLFSASDLEKALALGNGSVVASQWPATLSHRIDDMAKQYPQKLALNDGDNLRLTFQQMSQRADSIASALLSANVSRQQRVAVFQHPSSDCICSILAILRIGATYVPLDLRLELARLGSIVQDCEPTVFLVDSHTQSQAPDLMLTRPAMTINIADLPRIAPFPVMNRAAAEDEAVILYTSGSTGNPKGVPLTHENLRVNIEGNQAEFQFGPDDCLLQQIAFSFDFSVWQIFMALANGASLFIAPSTHRGDPVALMDLVVREDITITGATPSEYRSWFQHGDLARLKTSQWKTAVSAGEAMTTNMIRDFQALNKSDLRLVNGYGPTEASMSSNKLVVPYLTNKDHPEEWMEKGAVVAGYTAPNYSIYIVDEAMNLLPIGLPGQILIGGPGIASGYLNNKELSCIRFINDKYASPEQRACGWRWAHLTGDRGRIGADGRLRIEGRIEGDTQVKLRGYRIDLQDVEAAMLKASPGAFKDLVVSLHQSTQALVAHVVFSQHYPAHKHSQALEIKSLELPRYMWPARTVSIDQMPVTVHGKLDRKALQTMDLPAIEPMKQTSTAHLNEAQAQMVQLWEEVISKDILAAHHIVAESDFFAVGGTSMLLVDLQRQIKSWFKMEIALAELFSANTLEKMALLIKPQEDIATPAAVDAAPPSSPSPLALTASLPPAPTTINWSEEVQLPRVLREQTSSGTTVSVPEKTSGLRLVLTGATGFIGQALLQQLTANPAISTVHCIAVRDPSAIPAHEKILVHAGDLTHAALGLAPAEAQAIFREVDAVIHNGADVSFMKSYHSLRRTNVESTIALIQNSLSRQIPFHYISSSGIANLAGTTTFAEVSAASFIPPTDGSQGYLATKWVSERLLEEAHREFGLPVYIHRPSSVTGSNAPPLDLMDNLMTYARRLKAVPMPERSSWKGYLDFVPVEQVVRDVTGDVLSAAGTVPSARASKVHYIHHLGRQVSLTGLHRYLERETGAVYRVLKMGEWLEEATQVGMDALLRTYLESMDKEDVKVVFPRLVAGKRHASTVGVAKGVKIGESWLEKGKTLLFSW</sequence>
<comment type="function">
    <text evidence="6 10">Hybrid PKS-NRPS synthetase; part of the gene cluster that mediates the biosynthesis of oxaleimides, cytotoxic compounds containing an unusual disubstituted succinimide moiety (PubMed:28365998). The first step of the pathway is provided by the HR-PKS poxF that serves in a new mode of collaborative biosynthesis with the PKS-NRPS poxE, by providing the olefin containing amino acid substrate via the synthesis of an ACP-bound dec-4-enoate (PubMed:28365998). The cytochrome P450 monooxygenase poxM-catalyzed oxidation at the alpha-position creates the enzyme-bound 2-hydroxydec-4-enoyl-ACP thioester, which may be prone to spontaneous hydrolysis to yield 2-hydroxydec-4-enoic acid due to increased electrophilicity of the carbonyl (PubMed:28365998). 2-hydroxydec-4-enoic acid can then be further oxidized by poxM to yield the alpha-ketoacid 2-oxodec-4-enoicacid, which is reductively aminated by the aminotransferase poxL to yield (S,E)-2-aminodec-4-enoic acid (PubMed:28365998). The Hybrid PKS-NRPS synthetase poxE then performs condensation between the octaketide product of its PKS modules and the amino group of (S,E)-2-aminodec-4-enoic acid which is activated and incorporated by the adenylation domain (PubMed:28365998). The resulting aminoacyl product can be cyclized by the Diels-Alderase PoxQ and reductively released by the reductive (R) domain of poxE to yield an aldehyde intermediate (Probable) (PubMed:28365998). The released aldehyde is then substrate for a Knoevenagel condensation by the hydrolyase poxO followed by an oxidation at the 5-position of the pyrrolidone ring (PubMed:28365998). The presence of the olefin from the amino acid building block allows for migration of the substituted allyl group to occur (PubMed:28365998). This allylic transposition reaction takes place in a conjugate addition, semipinacol-like fashion to yield a succinimide intermediate (PubMed:28365998). Iterative two-electron oxidations of the C7 methyl of the succinimide intermediate to the carboxylic acid can be catalyzed by one of two remaining cytochrome P450 monooxygenasess poxC or poxD to yield oxaleimide A (PubMed:28365998). Subsequent oxidation yields the maleimide scaffold oxaleimide I (PubMed:28365998). Both oxaleimide A and oxaleimide I can undergo oxidative modifications in the decalin ring to yield the series of products oxaleimides B to H (PubMed:28365998).</text>
</comment>
<comment type="pathway">
    <text evidence="6">Secondary metabolite biosynthesis.</text>
</comment>
<comment type="induction">
    <text evidence="6">Expression is positively regulated by the oxaleimides biosynthesis cluster-specific transcription factor poxB.</text>
</comment>
<comment type="domain">
    <text evidence="6">PoxE has the following domain architecture: KS-MAT-DH-MT-KR-ACP-C-A-T-R. The PKS module (domains KS to ACP) is responsible for the biosynthesis of the octaketide chain and catalyzes Claisen condensations, as well as beta-keto processing and methylation. The downstream NRPS module contains the condensation (C), adenylation (A), and thiolation (T) domains and catalyzes the formation of the amide linkage between the octaketide and the (S,E)-2-aminodec-4-enoic acid produced by the polyketide synthase poxF. The bimodular assembly line is terminated with a putative reductase (R) domain that facilitates formation and release of the poxE product.</text>
</comment>
<comment type="disruption phenotype">
    <text evidence="6">Impairs the productin of oxaleimides.</text>
</comment>
<comment type="similarity">
    <text evidence="8">In the C-terminal section; belongs to the NRP synthetase family.</text>
</comment>
<keyword id="KW-0436">Ligase</keyword>
<keyword id="KW-0489">Methyltransferase</keyword>
<keyword id="KW-0511">Multifunctional enzyme</keyword>
<keyword id="KW-0560">Oxidoreductase</keyword>
<keyword id="KW-0596">Phosphopantetheine</keyword>
<keyword id="KW-0597">Phosphoprotein</keyword>
<keyword id="KW-1185">Reference proteome</keyword>
<keyword id="KW-0677">Repeat</keyword>
<keyword id="KW-0808">Transferase</keyword>
<organism>
    <name type="scientific">Penicillium oxalicum (strain 114-2 / CGMCC 5302)</name>
    <name type="common">Penicillium decumbens</name>
    <dbReference type="NCBI Taxonomy" id="933388"/>
    <lineage>
        <taxon>Eukaryota</taxon>
        <taxon>Fungi</taxon>
        <taxon>Dikarya</taxon>
        <taxon>Ascomycota</taxon>
        <taxon>Pezizomycotina</taxon>
        <taxon>Eurotiomycetes</taxon>
        <taxon>Eurotiomycetidae</taxon>
        <taxon>Eurotiales</taxon>
        <taxon>Aspergillaceae</taxon>
        <taxon>Penicillium</taxon>
    </lineage>
</organism>
<gene>
    <name evidence="7" type="primary">poxE</name>
    <name type="ORF">PDE_04017</name>
</gene>
<proteinExistence type="evidence at transcript level"/>
<reference key="1">
    <citation type="journal article" date="2013" name="PLoS ONE">
        <title>Genomic and secretomic analyses reveal unique features of the lignocellulolytic enzyme system of Penicillium decumbens.</title>
        <authorList>
            <person name="Liu G."/>
            <person name="Zhang L."/>
            <person name="Wei X."/>
            <person name="Zou G."/>
            <person name="Qin Y."/>
            <person name="Ma L."/>
            <person name="Li J."/>
            <person name="Zheng H."/>
            <person name="Wang S."/>
            <person name="Wang C."/>
            <person name="Xun L."/>
            <person name="Zhao G.-P."/>
            <person name="Zhou Z."/>
            <person name="Qu Y."/>
        </authorList>
    </citation>
    <scope>NUCLEOTIDE SEQUENCE [LARGE SCALE GENOMIC DNA]</scope>
    <source>
        <strain>114-2 / CGMCC 5302</strain>
    </source>
</reference>
<reference key="2">
    <citation type="journal article" date="2017" name="J. Am. Chem. Soc.">
        <title>Collaborative Biosynthesis of Maleimide- and Succinimide-Containing Natural Products by Fungal Polyketide Megasynthases.</title>
        <authorList>
            <person name="Sato M."/>
            <person name="Dander J.E."/>
            <person name="Sato C."/>
            <person name="Hung Y.S."/>
            <person name="Gao S.S."/>
            <person name="Tang M.C."/>
            <person name="Hang L."/>
            <person name="Winter J.M."/>
            <person name="Garg N.K."/>
            <person name="Watanabe K."/>
            <person name="Tang Y."/>
        </authorList>
    </citation>
    <scope>FUNCTION</scope>
    <scope>DISRUPTION PHENOTYPE</scope>
    <scope>INDUCTION</scope>
    <scope>PATHWAY</scope>
</reference>
<reference key="3">
    <citation type="journal article" date="2020" name="Chem. Commun. (Camb.)">
        <title>Evidence for enzyme catalysed intramolecular [4+2] Diels-Alder cyclization during the biosynthesis of pyrichalasin H.</title>
        <authorList>
            <person name="Hantke V."/>
            <person name="Skellam E.J."/>
            <person name="Cox R.J."/>
        </authorList>
    </citation>
    <scope>FUNCTION</scope>
</reference>
<protein>
    <recommendedName>
        <fullName evidence="7">Hybrid PKS-NRPS synthetase poxE</fullName>
        <shortName evidence="7">PKS-NRPS</shortName>
        <ecNumber evidence="6">2.3.1.-</ecNumber>
        <ecNumber evidence="6">6.3.2.-</ecNumber>
    </recommendedName>
    <alternativeName>
        <fullName evidence="7">Oxaleimides biosynthesis cluster protein E</fullName>
    </alternativeName>
</protein>
<accession>S7ZFK6</accession>
<name>POXE_PENO1</name>
<feature type="chain" id="PRO_0000453754" description="Hybrid PKS-NRPS synthetase poxE">
    <location>
        <begin position="1"/>
        <end position="4080"/>
    </location>
</feature>
<feature type="domain" description="Ketosynthase family 3 (KS3)" evidence="3 9">
    <location>
        <begin position="8"/>
        <end position="442"/>
    </location>
</feature>
<feature type="domain" description="PKS/mFAS DH" evidence="4">
    <location>
        <begin position="944"/>
        <end position="1246"/>
    </location>
</feature>
<feature type="domain" description="Carrier 1" evidence="2">
    <location>
        <begin position="2405"/>
        <end position="2481"/>
    </location>
</feature>
<feature type="domain" description="Carrier 2" evidence="2">
    <location>
        <begin position="3593"/>
        <end position="3673"/>
    </location>
</feature>
<feature type="region of interest" description="Malonyl-CoA:ACP transacylase (MAT) domain" evidence="1 9">
    <location>
        <begin position="554"/>
        <end position="878"/>
    </location>
</feature>
<feature type="region of interest" description="N-terminal hotdog fold" evidence="4">
    <location>
        <begin position="944"/>
        <end position="1078"/>
    </location>
</feature>
<feature type="region of interest" description="Dehydratase (DH) domain" evidence="1 9">
    <location>
        <begin position="945"/>
        <end position="1243"/>
    </location>
</feature>
<feature type="region of interest" description="C-terminal hotdog fold" evidence="4">
    <location>
        <begin position="1093"/>
        <end position="1246"/>
    </location>
</feature>
<feature type="region of interest" description="Methyltransferase (MT) domain" evidence="1 9">
    <location>
        <begin position="1400"/>
        <end position="1585"/>
    </location>
</feature>
<feature type="region of interest" description="Ketoreductase (KR)domain" evidence="1 9">
    <location>
        <begin position="2118"/>
        <end position="2292"/>
    </location>
</feature>
<feature type="region of interest" description="Peptidyl carrier protein" evidence="1 9">
    <location>
        <begin position="2399"/>
        <end position="2478"/>
    </location>
</feature>
<feature type="region of interest" description="Disordered" evidence="5">
    <location>
        <begin position="2488"/>
        <end position="2569"/>
    </location>
</feature>
<feature type="region of interest" description="Condensation" evidence="1 9">
    <location>
        <begin position="2607"/>
        <end position="3036"/>
    </location>
</feature>
<feature type="region of interest" description="Adenylation" evidence="1 9">
    <location>
        <begin position="3069"/>
        <end position="3478"/>
    </location>
</feature>
<feature type="region of interest" description="Thiolation" evidence="1 9">
    <location>
        <begin position="3598"/>
        <end position="3670"/>
    </location>
</feature>
<feature type="region of interest" description="Reductase (RED) domain" evidence="1 9">
    <location>
        <begin position="3740"/>
        <end position="3959"/>
    </location>
</feature>
<feature type="compositionally biased region" description="Basic and acidic residues" evidence="5">
    <location>
        <begin position="2511"/>
        <end position="2525"/>
    </location>
</feature>
<feature type="compositionally biased region" description="Low complexity" evidence="5">
    <location>
        <begin position="2528"/>
        <end position="2545"/>
    </location>
</feature>
<feature type="compositionally biased region" description="Polar residues" evidence="5">
    <location>
        <begin position="2551"/>
        <end position="2565"/>
    </location>
</feature>
<feature type="active site" description="For beta-ketoacyl synthase activity" evidence="3">
    <location>
        <position position="181"/>
    </location>
</feature>
<feature type="active site" description="For beta-ketoacyl synthase activity" evidence="3">
    <location>
        <position position="320"/>
    </location>
</feature>
<feature type="active site" description="For beta-ketoacyl synthase activity" evidence="3">
    <location>
        <position position="362"/>
    </location>
</feature>
<feature type="active site" description="Proton acceptor; for dehydratase activity" evidence="4">
    <location>
        <position position="976"/>
    </location>
</feature>
<feature type="active site" description="Proton donor; for dehydratase activity" evidence="4">
    <location>
        <position position="1152"/>
    </location>
</feature>
<feature type="modified residue" description="O-(pantetheine 4'-phosphoryl)serine" evidence="2">
    <location>
        <position position="2441"/>
    </location>
</feature>
<feature type="modified residue" description="O-(pantetheine 4'-phosphoryl)serine" evidence="2">
    <location>
        <position position="3633"/>
    </location>
</feature>